<keyword id="KW-0963">Cytoplasm</keyword>
<keyword id="KW-0489">Methyltransferase</keyword>
<keyword id="KW-0698">rRNA processing</keyword>
<keyword id="KW-0949">S-adenosyl-L-methionine</keyword>
<keyword id="KW-0808">Transferase</keyword>
<proteinExistence type="inferred from homology"/>
<sequence length="156" mass="17476">MNITVLAVGTKMPRWVDEAVAEYAKRFGRDAAYALKEIKPEKRGAGVNAVQGMAAEEKRILEAIPQGAFLVVLDERGKAPTSVELAEHLKSWRQNGEHVCFVIGGADGMTDRLKQQARMMMRLSSLTLPHGMVRVLLTEQLYRAVSILHNHPYHRE</sequence>
<feature type="chain" id="PRO_0000366627" description="Ribosomal RNA large subunit methyltransferase H">
    <location>
        <begin position="1"/>
        <end position="156"/>
    </location>
</feature>
<feature type="binding site" evidence="1">
    <location>
        <position position="73"/>
    </location>
    <ligand>
        <name>S-adenosyl-L-methionine</name>
        <dbReference type="ChEBI" id="CHEBI:59789"/>
    </ligand>
</feature>
<feature type="binding site" evidence="1">
    <location>
        <position position="104"/>
    </location>
    <ligand>
        <name>S-adenosyl-L-methionine</name>
        <dbReference type="ChEBI" id="CHEBI:59789"/>
    </ligand>
</feature>
<feature type="binding site" evidence="1">
    <location>
        <begin position="123"/>
        <end position="128"/>
    </location>
    <ligand>
        <name>S-adenosyl-L-methionine</name>
        <dbReference type="ChEBI" id="CHEBI:59789"/>
    </ligand>
</feature>
<protein>
    <recommendedName>
        <fullName evidence="1">Ribosomal RNA large subunit methyltransferase H</fullName>
        <ecNumber evidence="1">2.1.1.177</ecNumber>
    </recommendedName>
    <alternativeName>
        <fullName evidence="1">23S rRNA (pseudouridine1915-N3)-methyltransferase</fullName>
    </alternativeName>
    <alternativeName>
        <fullName evidence="1">23S rRNA m3Psi1915 methyltransferase</fullName>
    </alternativeName>
    <alternativeName>
        <fullName evidence="1">rRNA (pseudouridine-N3-)-methyltransferase RlmH</fullName>
    </alternativeName>
</protein>
<name>RLMH_NEIG2</name>
<dbReference type="EC" id="2.1.1.177" evidence="1"/>
<dbReference type="EMBL" id="CP001050">
    <property type="protein sequence ID" value="ACF31144.1"/>
    <property type="molecule type" value="Genomic_DNA"/>
</dbReference>
<dbReference type="RefSeq" id="WP_003690383.1">
    <property type="nucleotide sequence ID" value="NC_011035.1"/>
</dbReference>
<dbReference type="SMR" id="B4RR86"/>
<dbReference type="GeneID" id="66754408"/>
<dbReference type="KEGG" id="ngk:NGK_2544"/>
<dbReference type="HOGENOM" id="CLU_100552_1_0_4"/>
<dbReference type="Proteomes" id="UP000002564">
    <property type="component" value="Chromosome"/>
</dbReference>
<dbReference type="GO" id="GO:0005737">
    <property type="term" value="C:cytoplasm"/>
    <property type="evidence" value="ECO:0007669"/>
    <property type="project" value="UniProtKB-SubCell"/>
</dbReference>
<dbReference type="GO" id="GO:0070038">
    <property type="term" value="F:rRNA (pseudouridine-N3-)-methyltransferase activity"/>
    <property type="evidence" value="ECO:0007669"/>
    <property type="project" value="UniProtKB-UniRule"/>
</dbReference>
<dbReference type="CDD" id="cd18081">
    <property type="entry name" value="RlmH-like"/>
    <property type="match status" value="1"/>
</dbReference>
<dbReference type="Gene3D" id="3.40.1280.10">
    <property type="match status" value="1"/>
</dbReference>
<dbReference type="HAMAP" id="MF_00658">
    <property type="entry name" value="23SrRNA_methyltr_H"/>
    <property type="match status" value="1"/>
</dbReference>
<dbReference type="InterPro" id="IPR029028">
    <property type="entry name" value="Alpha/beta_knot_MTases"/>
</dbReference>
<dbReference type="InterPro" id="IPR003742">
    <property type="entry name" value="RlmH-like"/>
</dbReference>
<dbReference type="InterPro" id="IPR029026">
    <property type="entry name" value="tRNA_m1G_MTases_N"/>
</dbReference>
<dbReference type="NCBIfam" id="NF000986">
    <property type="entry name" value="PRK00103.1-4"/>
    <property type="match status" value="1"/>
</dbReference>
<dbReference type="PANTHER" id="PTHR33603">
    <property type="entry name" value="METHYLTRANSFERASE"/>
    <property type="match status" value="1"/>
</dbReference>
<dbReference type="PANTHER" id="PTHR33603:SF1">
    <property type="entry name" value="RIBOSOMAL RNA LARGE SUBUNIT METHYLTRANSFERASE H"/>
    <property type="match status" value="1"/>
</dbReference>
<dbReference type="Pfam" id="PF02590">
    <property type="entry name" value="SPOUT_MTase"/>
    <property type="match status" value="1"/>
</dbReference>
<dbReference type="PIRSF" id="PIRSF004505">
    <property type="entry name" value="MT_bac"/>
    <property type="match status" value="1"/>
</dbReference>
<dbReference type="SUPFAM" id="SSF75217">
    <property type="entry name" value="alpha/beta knot"/>
    <property type="match status" value="1"/>
</dbReference>
<gene>
    <name evidence="1" type="primary">rlmH</name>
    <name type="ordered locus">NGK_2544</name>
</gene>
<organism>
    <name type="scientific">Neisseria gonorrhoeae (strain NCCP11945)</name>
    <dbReference type="NCBI Taxonomy" id="521006"/>
    <lineage>
        <taxon>Bacteria</taxon>
        <taxon>Pseudomonadati</taxon>
        <taxon>Pseudomonadota</taxon>
        <taxon>Betaproteobacteria</taxon>
        <taxon>Neisseriales</taxon>
        <taxon>Neisseriaceae</taxon>
        <taxon>Neisseria</taxon>
    </lineage>
</organism>
<reference key="1">
    <citation type="journal article" date="2008" name="J. Bacteriol.">
        <title>Complete genome sequence of Neisseria gonorrhoeae NCCP11945.</title>
        <authorList>
            <person name="Chung G.T."/>
            <person name="Yoo J.S."/>
            <person name="Oh H.B."/>
            <person name="Lee Y.S."/>
            <person name="Cha S.H."/>
            <person name="Kim S.J."/>
            <person name="Yoo C.K."/>
        </authorList>
    </citation>
    <scope>NUCLEOTIDE SEQUENCE [LARGE SCALE GENOMIC DNA]</scope>
    <source>
        <strain>NCCP11945</strain>
    </source>
</reference>
<accession>B4RR86</accession>
<comment type="function">
    <text evidence="1">Specifically methylates the pseudouridine at position 1915 (m3Psi1915) in 23S rRNA.</text>
</comment>
<comment type="catalytic activity">
    <reaction evidence="1">
        <text>pseudouridine(1915) in 23S rRNA + S-adenosyl-L-methionine = N(3)-methylpseudouridine(1915) in 23S rRNA + S-adenosyl-L-homocysteine + H(+)</text>
        <dbReference type="Rhea" id="RHEA:42752"/>
        <dbReference type="Rhea" id="RHEA-COMP:10221"/>
        <dbReference type="Rhea" id="RHEA-COMP:10222"/>
        <dbReference type="ChEBI" id="CHEBI:15378"/>
        <dbReference type="ChEBI" id="CHEBI:57856"/>
        <dbReference type="ChEBI" id="CHEBI:59789"/>
        <dbReference type="ChEBI" id="CHEBI:65314"/>
        <dbReference type="ChEBI" id="CHEBI:74486"/>
        <dbReference type="EC" id="2.1.1.177"/>
    </reaction>
</comment>
<comment type="subunit">
    <text evidence="1">Homodimer.</text>
</comment>
<comment type="subcellular location">
    <subcellularLocation>
        <location evidence="1">Cytoplasm</location>
    </subcellularLocation>
</comment>
<comment type="similarity">
    <text evidence="1">Belongs to the RNA methyltransferase RlmH family.</text>
</comment>
<evidence type="ECO:0000255" key="1">
    <source>
        <dbReference type="HAMAP-Rule" id="MF_00658"/>
    </source>
</evidence>